<name>GRIK2_MOUSE</name>
<reference key="1">
    <citation type="journal article" date="1993" name="NeuroReport">
        <title>Expression and novel subunit isoforms of glutamate receptor genes GluR5 and GluR6.</title>
        <authorList>
            <person name="Gregor P."/>
            <person name="O'Hara B.F."/>
            <person name="Yang X."/>
            <person name="Uhl G.R."/>
        </authorList>
    </citation>
    <scope>NUCLEOTIDE SEQUENCE [MRNA] (ISOFORM GLUR6-2)</scope>
    <source>
        <strain>BALB/cJ</strain>
        <tissue>Brain</tissue>
    </source>
</reference>
<reference key="2">
    <citation type="journal article" date="1992" name="Brain Res. Mol. Brain Res.">
        <title>Cloning and functional expression of a cDNA encoding the mouse beta 2 subunit of the kainate-selective glutamate receptor channel.</title>
        <authorList>
            <person name="Morita T."/>
            <person name="Sakimura K."/>
            <person name="Kushiya E."/>
            <person name="Yamazaki M."/>
            <person name="Meguro H."/>
            <person name="Araki K."/>
            <person name="Abe T."/>
            <person name="Mori K.J."/>
            <person name="Mishina M."/>
        </authorList>
    </citation>
    <scope>NUCLEOTIDE SEQUENCE [MRNA] OF 1-854 (ISOFORM GLUR6 BETA2)</scope>
    <scope>FUNCTION</scope>
</reference>
<reference key="3">
    <citation type="journal article" date="1996" name="Proc. Natl. Acad. Sci. U.S.A.">
        <title>Q/R site editing in kainate receptor GluR5 and GluR6 pre-mRNAs requires distant intronic sequences.</title>
        <authorList>
            <person name="Herb A."/>
            <person name="Higuchi M."/>
            <person name="Sprengel R."/>
            <person name="Seeburg P.H."/>
        </authorList>
    </citation>
    <scope>NUCLEOTIDE SEQUENCE [GENOMIC DNA] OF 584-695</scope>
    <scope>RNA EDITING OF POSITION 621</scope>
    <source>
        <strain>BALB/cJ</strain>
    </source>
</reference>
<reference key="4">
    <citation type="journal article" date="1993" name="Neuron">
        <title>Determinants of Ca2+ permeability in both TM1 and TM2 of high affinity kainate receptor channels: diversity by RNA editing.</title>
        <authorList>
            <person name="Koehler M."/>
            <person name="Burnashev N."/>
            <person name="Sakmann B."/>
            <person name="Seeburg P.H."/>
        </authorList>
    </citation>
    <scope>NUCLEOTIDE SEQUENCE [MRNA] OF 560-585</scope>
    <scope>RNA EDITING OF POSITIONS 567; 571 AND 621</scope>
    <scope>FUNCTION</scope>
    <scope>TRANSPORTER ACTIVITY</scope>
    <source>
        <tissue>Brain</tissue>
    </source>
</reference>
<reference key="5">
    <citation type="journal article" date="2009" name="PLoS Biol.">
        <title>Lineage-specific biology revealed by a finished genome assembly of the mouse.</title>
        <authorList>
            <person name="Church D.M."/>
            <person name="Goodstadt L."/>
            <person name="Hillier L.W."/>
            <person name="Zody M.C."/>
            <person name="Goldstein S."/>
            <person name="She X."/>
            <person name="Bult C.J."/>
            <person name="Agarwala R."/>
            <person name="Cherry J.L."/>
            <person name="DiCuccio M."/>
            <person name="Hlavina W."/>
            <person name="Kapustin Y."/>
            <person name="Meric P."/>
            <person name="Maglott D."/>
            <person name="Birtle Z."/>
            <person name="Marques A.C."/>
            <person name="Graves T."/>
            <person name="Zhou S."/>
            <person name="Teague B."/>
            <person name="Potamousis K."/>
            <person name="Churas C."/>
            <person name="Place M."/>
            <person name="Herschleb J."/>
            <person name="Runnheim R."/>
            <person name="Forrest D."/>
            <person name="Amos-Landgraf J."/>
            <person name="Schwartz D.C."/>
            <person name="Cheng Z."/>
            <person name="Lindblad-Toh K."/>
            <person name="Eichler E.E."/>
            <person name="Ponting C.P."/>
        </authorList>
    </citation>
    <scope>NUCLEOTIDE SEQUENCE [LARGE SCALE GENOMIC DNA]</scope>
    <source>
        <strain>C57BL/6J</strain>
    </source>
</reference>
<reference key="6">
    <citation type="journal article" date="2003" name="J. Neurosci.">
        <title>Distribution of kainate receptor subunits at hippocampal mossy fiber synapses.</title>
        <authorList>
            <person name="Darstein M."/>
            <person name="Petralia R.S."/>
            <person name="Swanson G.T."/>
            <person name="Wenthold R.J."/>
            <person name="Heinemann S.F."/>
        </authorList>
    </citation>
    <scope>SUBUNIT</scope>
    <scope>TISSUE SPECIFICITY</scope>
</reference>
<reference key="7">
    <citation type="journal article" date="2006" name="Mol. Cell. Proteomics">
        <title>Comprehensive identification of phosphorylation sites in postsynaptic density preparations.</title>
        <authorList>
            <person name="Trinidad J.C."/>
            <person name="Specht C.G."/>
            <person name="Thalhammer A."/>
            <person name="Schoepfer R."/>
            <person name="Burlingame A.L."/>
        </authorList>
    </citation>
    <scope>IDENTIFICATION BY MASS SPECTROMETRY [LARGE SCALE ANALYSIS]</scope>
    <source>
        <tissue>Brain</tissue>
    </source>
</reference>
<reference key="8">
    <citation type="journal article" date="2007" name="Proc. Natl. Acad. Sci. U.S.A.">
        <title>GluR7 is an essential subunit of presynaptic kainate autoreceptors at hippocampal mossy fiber synapses.</title>
        <authorList>
            <person name="Pinheiro P.S."/>
            <person name="Perrais D."/>
            <person name="Coussen F."/>
            <person name="Barhanin J."/>
            <person name="Bettler B."/>
            <person name="Mann J.R."/>
            <person name="Malva J.O."/>
            <person name="Heinemann S.F."/>
            <person name="Mulle C."/>
        </authorList>
    </citation>
    <scope>FUNCTION</scope>
    <scope>TRANSPORTER ACTIVITY</scope>
    <scope>SUBUNIT</scope>
    <scope>SUBCELLULAR LOCATION</scope>
</reference>
<reference key="9">
    <citation type="journal article" date="2009" name="J. Neurosci.">
        <title>Atypical functional properties of GluK3-containing kainate receptors.</title>
        <authorList>
            <person name="Perrais D."/>
            <person name="Coussen F."/>
            <person name="Mulle C."/>
        </authorList>
    </citation>
    <scope>FUNCTION</scope>
    <scope>TRANSPORTER ACTIVITY</scope>
</reference>
<reference key="10">
    <citation type="journal article" date="2009" name="Neuron">
        <title>A transmembrane accessory subunit that modulates kainate-type glutamate receptors.</title>
        <authorList>
            <person name="Zhang W."/>
            <person name="St-Gelais F."/>
            <person name="Grabner C.P."/>
            <person name="Trinidad J.C."/>
            <person name="Sumioka A."/>
            <person name="Morimoto-Tomita M."/>
            <person name="Kim K.S."/>
            <person name="Straub C."/>
            <person name="Burlingame A.L."/>
            <person name="Howe J.R."/>
            <person name="Tomita S."/>
        </authorList>
    </citation>
    <scope>FUNCTION</scope>
    <scope>INTERACTION WITH NETO2</scope>
</reference>
<reference key="11">
    <citation type="journal article" date="2010" name="Cell">
        <title>A tissue-specific atlas of mouse protein phosphorylation and expression.</title>
        <authorList>
            <person name="Huttlin E.L."/>
            <person name="Jedrychowski M.P."/>
            <person name="Elias J.E."/>
            <person name="Goswami T."/>
            <person name="Rad R."/>
            <person name="Beausoleil S.A."/>
            <person name="Villen J."/>
            <person name="Haas W."/>
            <person name="Sowa M.E."/>
            <person name="Gygi S.P."/>
        </authorList>
    </citation>
    <scope>IDENTIFICATION BY MASS SPECTROMETRY [LARGE SCALE ANALYSIS]</scope>
    <source>
        <tissue>Brain</tissue>
    </source>
</reference>
<reference key="12">
    <citation type="journal article" date="2019" name="Cell">
        <title>A Cold-Sensing Receptor Encoded by a Glutamate Receptor Gene.</title>
        <authorList>
            <person name="Gong J."/>
            <person name="Liu J."/>
            <person name="Ronan E.A."/>
            <person name="He F."/>
            <person name="Cai W."/>
            <person name="Fatima M."/>
            <person name="Zhang W."/>
            <person name="Lee H."/>
            <person name="Li Z."/>
            <person name="Kim G.H."/>
            <person name="Pipe K.P."/>
            <person name="Duan B."/>
            <person name="Liu J."/>
            <person name="Xu X.Z.S."/>
        </authorList>
    </citation>
    <scope>FUNCTION</scope>
    <scope>ACTIVITY REGULATION</scope>
    <scope>TISSUE SPECIFICITY</scope>
    <scope>MUTAGENESIS OF PRO-151; MET-620 AND GLN-622</scope>
    <scope>DEVELOPMENTAL STAGE</scope>
</reference>
<keyword id="KW-0025">Alternative splicing</keyword>
<keyword id="KW-1003">Cell membrane</keyword>
<keyword id="KW-1015">Disulfide bond</keyword>
<keyword id="KW-0325">Glycoprotein</keyword>
<keyword id="KW-0407">Ion channel</keyword>
<keyword id="KW-0406">Ion transport</keyword>
<keyword id="KW-1017">Isopeptide bond</keyword>
<keyword id="KW-1071">Ligand-gated ion channel</keyword>
<keyword id="KW-0472">Membrane</keyword>
<keyword id="KW-0597">Phosphoprotein</keyword>
<keyword id="KW-0628">Postsynaptic cell membrane</keyword>
<keyword id="KW-0675">Receptor</keyword>
<keyword id="KW-1185">Reference proteome</keyword>
<keyword id="KW-0691">RNA editing</keyword>
<keyword id="KW-0732">Signal</keyword>
<keyword id="KW-0770">Synapse</keyword>
<keyword id="KW-0812">Transmembrane</keyword>
<keyword id="KW-1133">Transmembrane helix</keyword>
<keyword id="KW-0813">Transport</keyword>
<keyword id="KW-0832">Ubl conjugation</keyword>
<dbReference type="EMBL" id="X66117">
    <property type="protein sequence ID" value="CAA46907.1"/>
    <property type="molecule type" value="mRNA"/>
</dbReference>
<dbReference type="EMBL" id="D10054">
    <property type="protein sequence ID" value="BAA00943.1"/>
    <property type="status" value="ALT_FRAME"/>
    <property type="molecule type" value="mRNA"/>
</dbReference>
<dbReference type="EMBL" id="U31443">
    <property type="protein sequence ID" value="AAA85221.1"/>
    <property type="molecule type" value="Genomic_DNA"/>
</dbReference>
<dbReference type="EMBL" id="AC113305">
    <property type="status" value="NOT_ANNOTATED_CDS"/>
    <property type="molecule type" value="Genomic_DNA"/>
</dbReference>
<dbReference type="EMBL" id="AC153801">
    <property type="status" value="NOT_ANNOTATED_CDS"/>
    <property type="molecule type" value="Genomic_DNA"/>
</dbReference>
<dbReference type="EMBL" id="AC153953">
    <property type="status" value="NOT_ANNOTATED_CDS"/>
    <property type="molecule type" value="Genomic_DNA"/>
</dbReference>
<dbReference type="EMBL" id="AC152981">
    <property type="status" value="NOT_ANNOTATED_CDS"/>
    <property type="molecule type" value="Genomic_DNA"/>
</dbReference>
<dbReference type="EMBL" id="AC110043">
    <property type="status" value="NOT_ANNOTATED_CDS"/>
    <property type="molecule type" value="Genomic_DNA"/>
</dbReference>
<dbReference type="EMBL" id="AC115891">
    <property type="status" value="NOT_ANNOTATED_CDS"/>
    <property type="molecule type" value="Genomic_DNA"/>
</dbReference>
<dbReference type="CCDS" id="CCDS23830.1">
    <molecule id="P39087-2"/>
</dbReference>
<dbReference type="CCDS" id="CCDS48554.1">
    <molecule id="P39087-1"/>
</dbReference>
<dbReference type="PIR" id="A43954">
    <property type="entry name" value="A43954"/>
</dbReference>
<dbReference type="PIR" id="S35792">
    <property type="entry name" value="S35792"/>
</dbReference>
<dbReference type="RefSeq" id="NP_001104738.2">
    <molecule id="P39087-1"/>
    <property type="nucleotide sequence ID" value="NM_001111268.3"/>
</dbReference>
<dbReference type="RefSeq" id="NP_001345795.2">
    <molecule id="P39087-1"/>
    <property type="nucleotide sequence ID" value="NM_001358866.2"/>
</dbReference>
<dbReference type="RefSeq" id="NP_034479.3">
    <molecule id="P39087-2"/>
    <property type="nucleotide sequence ID" value="NM_010349.4"/>
</dbReference>
<dbReference type="RefSeq" id="XP_017169293.1">
    <property type="nucleotide sequence ID" value="XM_017313804.1"/>
</dbReference>
<dbReference type="RefSeq" id="XP_036011514.1">
    <molecule id="P39087-1"/>
    <property type="nucleotide sequence ID" value="XM_036155621.1"/>
</dbReference>
<dbReference type="SMR" id="P39087"/>
<dbReference type="BioGRID" id="200064">
    <property type="interactions" value="8"/>
</dbReference>
<dbReference type="CORUM" id="P39087"/>
<dbReference type="FunCoup" id="P39087">
    <property type="interactions" value="910"/>
</dbReference>
<dbReference type="IntAct" id="P39087">
    <property type="interactions" value="6"/>
</dbReference>
<dbReference type="MINT" id="P39087"/>
<dbReference type="STRING" id="10090.ENSMUSP00000151921"/>
<dbReference type="GlyConnect" id="2347">
    <property type="glycosylation" value="5 N-Linked glycans (3 sites)"/>
</dbReference>
<dbReference type="GlyCosmos" id="P39087">
    <property type="glycosylation" value="9 sites, 5 glycans"/>
</dbReference>
<dbReference type="GlyGen" id="P39087">
    <property type="glycosylation" value="10 sites, 12 N-linked glycans (8 sites), 1 O-linked glycan (1 site)"/>
</dbReference>
<dbReference type="iPTMnet" id="P39087"/>
<dbReference type="PhosphoSitePlus" id="P39087"/>
<dbReference type="SwissPalm" id="P39087"/>
<dbReference type="PaxDb" id="10090-ENSMUSP00000101127"/>
<dbReference type="PeptideAtlas" id="P39087"/>
<dbReference type="ProteomicsDB" id="269832">
    <molecule id="P39087-1"/>
</dbReference>
<dbReference type="ProteomicsDB" id="269833">
    <molecule id="P39087-2"/>
</dbReference>
<dbReference type="Pumba" id="P39087"/>
<dbReference type="Antibodypedia" id="3038">
    <property type="antibodies" value="355 antibodies from 36 providers"/>
</dbReference>
<dbReference type="Ensembl" id="ENSMUST00000079751.9">
    <molecule id="P39087-2"/>
    <property type="protein sequence ID" value="ENSMUSP00000078687.3"/>
    <property type="gene ID" value="ENSMUSG00000056073.17"/>
</dbReference>
<dbReference type="Ensembl" id="ENSMUST00000105484.10">
    <molecule id="P39087-1"/>
    <property type="protein sequence ID" value="ENSMUSP00000101124.4"/>
    <property type="gene ID" value="ENSMUSG00000056073.17"/>
</dbReference>
<dbReference type="Ensembl" id="ENSMUST00000218441.2">
    <molecule id="P39087-2"/>
    <property type="protein sequence ID" value="ENSMUSP00000151671.2"/>
    <property type="gene ID" value="ENSMUSG00000056073.17"/>
</dbReference>
<dbReference type="Ensembl" id="ENSMUST00000218823.2">
    <molecule id="P39087-1"/>
    <property type="protein sequence ID" value="ENSMUSP00000151921.2"/>
    <property type="gene ID" value="ENSMUSG00000056073.17"/>
</dbReference>
<dbReference type="GeneID" id="14806"/>
<dbReference type="AGR" id="MGI:95815"/>
<dbReference type="MGI" id="MGI:95815">
    <property type="gene designation" value="Grik2"/>
</dbReference>
<dbReference type="VEuPathDB" id="HostDB:ENSMUSG00000056073"/>
<dbReference type="eggNOG" id="KOG1052">
    <property type="taxonomic scope" value="Eukaryota"/>
</dbReference>
<dbReference type="GeneTree" id="ENSGT00940000155610"/>
<dbReference type="HOGENOM" id="CLU_007257_1_1_1"/>
<dbReference type="InParanoid" id="P39087"/>
<dbReference type="OMA" id="QCKFRVI"/>
<dbReference type="OrthoDB" id="5984008at2759"/>
<dbReference type="PhylomeDB" id="P39087"/>
<dbReference type="TreeFam" id="TF334668"/>
<dbReference type="Reactome" id="R-MMU-451307">
    <property type="pathway name" value="Activation of Na-permeable kainate receptors"/>
</dbReference>
<dbReference type="Reactome" id="R-MMU-451308">
    <property type="pathway name" value="Activation of Ca-permeable Kainate Receptor"/>
</dbReference>
<dbReference type="BioGRID-ORCS" id="14806">
    <property type="hits" value="2 hits in 78 CRISPR screens"/>
</dbReference>
<dbReference type="ChiTaRS" id="Grik2">
    <property type="organism name" value="mouse"/>
</dbReference>
<dbReference type="PRO" id="PR:P39087"/>
<dbReference type="Proteomes" id="UP000000589">
    <property type="component" value="Chromosome 10"/>
</dbReference>
<dbReference type="RNAct" id="P39087">
    <property type="molecule type" value="protein"/>
</dbReference>
<dbReference type="Bgee" id="ENSMUSG00000056073">
    <property type="expression patterns" value="Expressed in dentate gyrus of hippocampal formation granule cell and 103 other cell types or tissues"/>
</dbReference>
<dbReference type="ExpressionAtlas" id="P39087">
    <property type="expression patterns" value="baseline and differential"/>
</dbReference>
<dbReference type="GO" id="GO:0032839">
    <property type="term" value="C:dendrite cytoplasm"/>
    <property type="evidence" value="ECO:0007669"/>
    <property type="project" value="Ensembl"/>
</dbReference>
<dbReference type="GO" id="GO:0098978">
    <property type="term" value="C:glutamatergic synapse"/>
    <property type="evidence" value="ECO:0000314"/>
    <property type="project" value="SynGO"/>
</dbReference>
<dbReference type="GO" id="GO:0098686">
    <property type="term" value="C:hippocampal mossy fiber to CA3 synapse"/>
    <property type="evidence" value="ECO:0000314"/>
    <property type="project" value="SynGO"/>
</dbReference>
<dbReference type="GO" id="GO:0008328">
    <property type="term" value="C:ionotropic glutamate receptor complex"/>
    <property type="evidence" value="ECO:0000305"/>
    <property type="project" value="MGI"/>
</dbReference>
<dbReference type="GO" id="GO:0032983">
    <property type="term" value="C:kainate selective glutamate receptor complex"/>
    <property type="evidence" value="ECO:0000353"/>
    <property type="project" value="MGI"/>
</dbReference>
<dbReference type="GO" id="GO:0016020">
    <property type="term" value="C:membrane"/>
    <property type="evidence" value="ECO:0000314"/>
    <property type="project" value="MGI"/>
</dbReference>
<dbReference type="GO" id="GO:0097471">
    <property type="term" value="C:mossy fiber rosette"/>
    <property type="evidence" value="ECO:0000314"/>
    <property type="project" value="SynGO"/>
</dbReference>
<dbReference type="GO" id="GO:0043025">
    <property type="term" value="C:neuronal cell body"/>
    <property type="evidence" value="ECO:0000314"/>
    <property type="project" value="MGI"/>
</dbReference>
<dbReference type="GO" id="GO:0043204">
    <property type="term" value="C:perikaryon"/>
    <property type="evidence" value="ECO:0007669"/>
    <property type="project" value="Ensembl"/>
</dbReference>
<dbReference type="GO" id="GO:0098794">
    <property type="term" value="C:postsynapse"/>
    <property type="evidence" value="ECO:0007669"/>
    <property type="project" value="GOC"/>
</dbReference>
<dbReference type="GO" id="GO:0014069">
    <property type="term" value="C:postsynaptic density"/>
    <property type="evidence" value="ECO:0000314"/>
    <property type="project" value="MGI"/>
</dbReference>
<dbReference type="GO" id="GO:0045211">
    <property type="term" value="C:postsynaptic membrane"/>
    <property type="evidence" value="ECO:0000314"/>
    <property type="project" value="MGI"/>
</dbReference>
<dbReference type="GO" id="GO:0042734">
    <property type="term" value="C:presynaptic membrane"/>
    <property type="evidence" value="ECO:0000314"/>
    <property type="project" value="MGI"/>
</dbReference>
<dbReference type="GO" id="GO:0045202">
    <property type="term" value="C:synapse"/>
    <property type="evidence" value="ECO:0000314"/>
    <property type="project" value="MGI"/>
</dbReference>
<dbReference type="GO" id="GO:0043195">
    <property type="term" value="C:terminal bouton"/>
    <property type="evidence" value="ECO:0007669"/>
    <property type="project" value="Ensembl"/>
</dbReference>
<dbReference type="GO" id="GO:0005234">
    <property type="term" value="F:extracellularly glutamate-gated ion channel activity"/>
    <property type="evidence" value="ECO:0000250"/>
    <property type="project" value="UniProtKB"/>
</dbReference>
<dbReference type="GO" id="GO:0022849">
    <property type="term" value="F:glutamate-gated calcium ion channel activity"/>
    <property type="evidence" value="ECO:0000314"/>
    <property type="project" value="UniProtKB"/>
</dbReference>
<dbReference type="GO" id="GO:0004970">
    <property type="term" value="F:glutamate-gated receptor activity"/>
    <property type="evidence" value="ECO:0000314"/>
    <property type="project" value="UniProtKB"/>
</dbReference>
<dbReference type="GO" id="GO:0042802">
    <property type="term" value="F:identical protein binding"/>
    <property type="evidence" value="ECO:0007669"/>
    <property type="project" value="Ensembl"/>
</dbReference>
<dbReference type="GO" id="GO:0015277">
    <property type="term" value="F:kainate selective glutamate receptor activity"/>
    <property type="evidence" value="ECO:0000314"/>
    <property type="project" value="UniProtKB"/>
</dbReference>
<dbReference type="GO" id="GO:0099507">
    <property type="term" value="F:ligand-gated monoatomic ion channel activity involved in regulation of presynaptic membrane potential"/>
    <property type="evidence" value="ECO:0000314"/>
    <property type="project" value="SynGO"/>
</dbReference>
<dbReference type="GO" id="GO:0030165">
    <property type="term" value="F:PDZ domain binding"/>
    <property type="evidence" value="ECO:0007669"/>
    <property type="project" value="Ensembl"/>
</dbReference>
<dbReference type="GO" id="GO:0097110">
    <property type="term" value="F:scaffold protein binding"/>
    <property type="evidence" value="ECO:0007669"/>
    <property type="project" value="Ensembl"/>
</dbReference>
<dbReference type="GO" id="GO:0000149">
    <property type="term" value="F:SNARE binding"/>
    <property type="evidence" value="ECO:0007669"/>
    <property type="project" value="Ensembl"/>
</dbReference>
<dbReference type="GO" id="GO:1904315">
    <property type="term" value="F:transmitter-gated monoatomic ion channel activity involved in regulation of postsynaptic membrane potential"/>
    <property type="evidence" value="ECO:0000314"/>
    <property type="project" value="SynGO"/>
</dbReference>
<dbReference type="GO" id="GO:0031624">
    <property type="term" value="F:ubiquitin conjugating enzyme binding"/>
    <property type="evidence" value="ECO:0007669"/>
    <property type="project" value="Ensembl"/>
</dbReference>
<dbReference type="GO" id="GO:0031625">
    <property type="term" value="F:ubiquitin protein ligase binding"/>
    <property type="evidence" value="ECO:0007669"/>
    <property type="project" value="Ensembl"/>
</dbReference>
<dbReference type="GO" id="GO:0001662">
    <property type="term" value="P:behavioral fear response"/>
    <property type="evidence" value="ECO:0000315"/>
    <property type="project" value="MGI"/>
</dbReference>
<dbReference type="GO" id="GO:0007268">
    <property type="term" value="P:chemical synaptic transmission"/>
    <property type="evidence" value="ECO:0000315"/>
    <property type="project" value="MGI"/>
</dbReference>
<dbReference type="GO" id="GO:0120169">
    <property type="term" value="P:detection of cold stimulus involved in thermoception"/>
    <property type="evidence" value="ECO:0000315"/>
    <property type="project" value="UniProtKB"/>
</dbReference>
<dbReference type="GO" id="GO:0060079">
    <property type="term" value="P:excitatory postsynaptic potential"/>
    <property type="evidence" value="ECO:0000315"/>
    <property type="project" value="MGI"/>
</dbReference>
<dbReference type="GO" id="GO:0060080">
    <property type="term" value="P:inhibitory postsynaptic potential"/>
    <property type="evidence" value="ECO:0000315"/>
    <property type="project" value="MGI"/>
</dbReference>
<dbReference type="GO" id="GO:0006874">
    <property type="term" value="P:intracellular calcium ion homeostasis"/>
    <property type="evidence" value="ECO:0000315"/>
    <property type="project" value="MGI"/>
</dbReference>
<dbReference type="GO" id="GO:0006886">
    <property type="term" value="P:intracellular protein transport"/>
    <property type="evidence" value="ECO:0000314"/>
    <property type="project" value="MGI"/>
</dbReference>
<dbReference type="GO" id="GO:0098815">
    <property type="term" value="P:modulation of excitatory postsynaptic potential"/>
    <property type="evidence" value="ECO:0007669"/>
    <property type="project" value="Ensembl"/>
</dbReference>
<dbReference type="GO" id="GO:0043524">
    <property type="term" value="P:negative regulation of neuron apoptotic process"/>
    <property type="evidence" value="ECO:0000316"/>
    <property type="project" value="MGI"/>
</dbReference>
<dbReference type="GO" id="GO:0051967">
    <property type="term" value="P:negative regulation of synaptic transmission, glutamatergic"/>
    <property type="evidence" value="ECO:0000316"/>
    <property type="project" value="MGI"/>
</dbReference>
<dbReference type="GO" id="GO:0051402">
    <property type="term" value="P:neuron apoptotic process"/>
    <property type="evidence" value="ECO:0000316"/>
    <property type="project" value="MGI"/>
</dbReference>
<dbReference type="GO" id="GO:0019228">
    <property type="term" value="P:neuronal action potential"/>
    <property type="evidence" value="ECO:0000315"/>
    <property type="project" value="MGI"/>
</dbReference>
<dbReference type="GO" id="GO:0043525">
    <property type="term" value="P:positive regulation of neuron apoptotic process"/>
    <property type="evidence" value="ECO:0007669"/>
    <property type="project" value="Ensembl"/>
</dbReference>
<dbReference type="GO" id="GO:0050806">
    <property type="term" value="P:positive regulation of synaptic transmission"/>
    <property type="evidence" value="ECO:0007669"/>
    <property type="project" value="Ensembl"/>
</dbReference>
<dbReference type="GO" id="GO:0099171">
    <property type="term" value="P:presynaptic modulation of chemical synaptic transmission"/>
    <property type="evidence" value="ECO:0000316"/>
    <property type="project" value="MGI"/>
</dbReference>
<dbReference type="GO" id="GO:0043113">
    <property type="term" value="P:receptor clustering"/>
    <property type="evidence" value="ECO:0007669"/>
    <property type="project" value="Ensembl"/>
</dbReference>
<dbReference type="GO" id="GO:0046328">
    <property type="term" value="P:regulation of JNK cascade"/>
    <property type="evidence" value="ECO:0007669"/>
    <property type="project" value="Ensembl"/>
</dbReference>
<dbReference type="GO" id="GO:0048169">
    <property type="term" value="P:regulation of long-term neuronal synaptic plasticity"/>
    <property type="evidence" value="ECO:0000315"/>
    <property type="project" value="MGI"/>
</dbReference>
<dbReference type="GO" id="GO:0042391">
    <property type="term" value="P:regulation of membrane potential"/>
    <property type="evidence" value="ECO:0000314"/>
    <property type="project" value="MGI"/>
</dbReference>
<dbReference type="GO" id="GO:0048172">
    <property type="term" value="P:regulation of short-term neuronal synaptic plasticity"/>
    <property type="evidence" value="ECO:0000315"/>
    <property type="project" value="MGI"/>
</dbReference>
<dbReference type="GO" id="GO:0035249">
    <property type="term" value="P:synaptic transmission, glutamatergic"/>
    <property type="evidence" value="ECO:0000315"/>
    <property type="project" value="MGI"/>
</dbReference>
<dbReference type="CDD" id="cd06382">
    <property type="entry name" value="PBP1_iGluR_Kainate"/>
    <property type="match status" value="1"/>
</dbReference>
<dbReference type="FunFam" id="3.40.50.2300:FF:000010">
    <property type="entry name" value="Glutamate ionotropic receptor kainate type subunit 1"/>
    <property type="match status" value="1"/>
</dbReference>
<dbReference type="FunFam" id="3.40.190.10:FF:000210">
    <property type="entry name" value="Glutamate receptor ionotropic, kainate 1"/>
    <property type="match status" value="1"/>
</dbReference>
<dbReference type="FunFam" id="3.40.190.10:FF:000240">
    <property type="entry name" value="Glutamate receptor ionotropic, kainate 2"/>
    <property type="match status" value="1"/>
</dbReference>
<dbReference type="FunFam" id="1.10.287.70:FF:000010">
    <property type="entry name" value="Putative glutamate receptor ionotropic kainate 1"/>
    <property type="match status" value="1"/>
</dbReference>
<dbReference type="Gene3D" id="1.10.287.70">
    <property type="match status" value="1"/>
</dbReference>
<dbReference type="Gene3D" id="3.40.50.2300">
    <property type="match status" value="2"/>
</dbReference>
<dbReference type="Gene3D" id="3.40.190.10">
    <property type="entry name" value="Periplasmic binding protein-like II"/>
    <property type="match status" value="1"/>
</dbReference>
<dbReference type="InterPro" id="IPR001828">
    <property type="entry name" value="ANF_lig-bd_rcpt"/>
</dbReference>
<dbReference type="InterPro" id="IPR019594">
    <property type="entry name" value="Glu/Gly-bd"/>
</dbReference>
<dbReference type="InterPro" id="IPR001508">
    <property type="entry name" value="Iono_Glu_rcpt_met"/>
</dbReference>
<dbReference type="InterPro" id="IPR015683">
    <property type="entry name" value="Ionotropic_Glu_rcpt"/>
</dbReference>
<dbReference type="InterPro" id="IPR001320">
    <property type="entry name" value="Iontro_rcpt_C"/>
</dbReference>
<dbReference type="InterPro" id="IPR028082">
    <property type="entry name" value="Peripla_BP_I"/>
</dbReference>
<dbReference type="PANTHER" id="PTHR18966">
    <property type="entry name" value="IONOTROPIC GLUTAMATE RECEPTOR"/>
    <property type="match status" value="1"/>
</dbReference>
<dbReference type="Pfam" id="PF01094">
    <property type="entry name" value="ANF_receptor"/>
    <property type="match status" value="1"/>
</dbReference>
<dbReference type="Pfam" id="PF00060">
    <property type="entry name" value="Lig_chan"/>
    <property type="match status" value="1"/>
</dbReference>
<dbReference type="Pfam" id="PF10613">
    <property type="entry name" value="Lig_chan-Glu_bd"/>
    <property type="match status" value="1"/>
</dbReference>
<dbReference type="PRINTS" id="PR00177">
    <property type="entry name" value="NMDARECEPTOR"/>
</dbReference>
<dbReference type="SMART" id="SM00918">
    <property type="entry name" value="Lig_chan-Glu_bd"/>
    <property type="match status" value="1"/>
</dbReference>
<dbReference type="SMART" id="SM00079">
    <property type="entry name" value="PBPe"/>
    <property type="match status" value="1"/>
</dbReference>
<dbReference type="SUPFAM" id="SSF53822">
    <property type="entry name" value="Periplasmic binding protein-like I"/>
    <property type="match status" value="1"/>
</dbReference>
<dbReference type="SUPFAM" id="SSF53850">
    <property type="entry name" value="Periplasmic binding protein-like II"/>
    <property type="match status" value="1"/>
</dbReference>
<sequence length="908" mass="102486">MKIISPVLSNLVFSRSIKVLLCLLWIGYSQGTTHVLRFGGIFEYVESGPMGAEELAFRFAVNTINRNRTLLPNTTLTYDTQKINLYDSFEASKKACDQLSLGVAAIFGPSHSSSANAVQSICNALGVPHIQTRWKHQVSDNKDSFYVSLYPDFSSLSRAILDLVQFFKWKTVTVVYDDSTGLIRLQELIKAPSRYNLRLKIRQLPADTKDAKPLLKEMKRGKEFHVIFDCSHEMAAGILKQALAMGMMTEYYHYIFTTLDLFALDVEPYRYSGVNMTGFRILNTENTQVSSIIEKWSMERLQAPPKPDSGLLDGFMTTDAALMYDAVHVVSVAVQQFPQMTVSSLQCNRHKPWRFGTRFMSLIKEAHWEGLTGRITFNKTNGLRTDFDLDVISLKEEGLEKIGTWDPSSGLNMTESQKGKPANITDSLSNRSLIVTTILEEPYVLFKKSDKPLYGNDRFEGYCIDLLRELSTILGFTYEIRLVEDGKYGAQDDVNGQWNGMVRELIDHKADLAVAPLAITYVREKVIDFSKPFMTLGISILYRKPNGTNPGVFSFLNPLSPDIWMYILLAYLGVSCVLFVIARFSPYEWYNPHPCNPDSDVVENNFTLLNSFWFGVGALMQQGSELMPKALSTRIVGGIWWFFTLIIISSYTANLAAFLTVERMESPIDSADDLAKQTKIEYGAVEDGATMTFFKKSKISTYDKMWAFMSSRRQSVLVKSNEEGIQRVLTSDYAFLMESTTIEFVTQRNCNLTQIGGLIDSKGYGVGTPMGSPYRDKITIAILQLQEEGKLHMMKEKWWRGNGCPEEESKEASALGVQNIGGIFIVLAAGLVLSVFVAVGEFLYKSKKNAQLEKRSFCSAMVEELRMSLKCQRRLKHKPQAPVIVKTEEVINMHTFNDRRLPGKETMA</sequence>
<comment type="function">
    <text evidence="6 7 8 9 10">Ionotropic glutamate receptor that functions as a cation-permeable ligand-gated ion channel, gated by L-glutamate and the glutamatergic agonist kainic acid. L-glutamate acts as an excitatory neurotransmitter at many synapses in the central nervous system. Binding of the excitatory neurotransmitter L-glutamate induces a conformation change, leading to the opening of the cation channel, and thereby converts the chemical signal to an electrical impulse. The receptor then desensitizes rapidly and enters a transient inactive state, characterized by the presence of bound agonist (PubMed:17620617, PubMed:19217376, PubMed:20007474, PubMed:31474366, PubMed:7681676). Modulates cell surface expression of NETO2 (PubMed:19217376). In association with GRIK3, involved in presynaptic facilitation of glutamate release at hippocampal mossy fiber synapses (PubMed:17620617).</text>
</comment>
<comment type="function">
    <text evidence="9">Independent of its ionotropic glutamate receptor activity, acts as a thermoreceptor conferring sensitivity to cold temperatures (PubMed:31474366). Functions in dorsal root ganglion neurons (PubMed:31474366).</text>
</comment>
<comment type="function">
    <molecule>Isoform GluR6-2</molecule>
    <text evidence="5">Ionotropic glutamate receptor that functions as a cation-permeable ligand-gated ion channel, gated by L-glutamate and the glutamatergic agonist kainic acid.</text>
</comment>
<comment type="catalytic activity">
    <reaction evidence="6 8 10">
        <text>Ca(2+)(in) = Ca(2+)(out)</text>
        <dbReference type="Rhea" id="RHEA:29671"/>
        <dbReference type="ChEBI" id="CHEBI:29108"/>
    </reaction>
</comment>
<comment type="catalytic activity">
    <reaction evidence="2">
        <text>Na(+)(in) = Na(+)(out)</text>
        <dbReference type="Rhea" id="RHEA:34963"/>
        <dbReference type="ChEBI" id="CHEBI:29101"/>
    </reaction>
</comment>
<comment type="activity regulation">
    <text evidence="9">Cold receptor activity activated by temperatures between 10-19 degrees Celsius.</text>
</comment>
<comment type="subunit">
    <text evidence="1 2 4 6 7">Homotetramer and heterotetramer with GRIK5. Tetramers may be formed by the dimerization of dimers. Assembles into a kainate-gated homomeric channel that does not bind AMPA (By similarity). Can form functional heteromeric receptors with GRIK3 (PubMed:17620617). Forms a heteromeric complex with GRIK4 and GRIK5 (PubMed:12954862). Interacts with DLG4 (By similarity). Interacts (via C-terminus) with KLHL17 (via kelch repeats); the interaction targets GRIK2 for degradation via ubiquitin-proteasome pathway (By similarity). Interacts with NETO2 (PubMed:19217376).</text>
</comment>
<comment type="subcellular location">
    <subcellularLocation>
        <location evidence="6">Cell membrane</location>
        <topology evidence="3">Multi-pass membrane protein</topology>
    </subcellularLocation>
    <subcellularLocation>
        <location evidence="1">Postsynaptic cell membrane</location>
        <topology evidence="3">Multi-pass membrane protein</topology>
    </subcellularLocation>
</comment>
<comment type="alternative products">
    <event type="alternative splicing"/>
    <isoform>
        <id>P39087-1</id>
        <name>GluR6 Beta2</name>
        <sequence type="displayed"/>
    </isoform>
    <isoform>
        <id>P39087-2</id>
        <name>GluR6-2</name>
        <sequence type="described" ref="VSP_000133"/>
    </isoform>
</comment>
<comment type="tissue specificity">
    <text evidence="4 9">Expressed in the hippocampal mossy fiber synapses (at protein level) (PubMed:12954862). Most abundant in the cerebellum and the hypothalamus. Expressed in a proportion of dorsal root ganglion (DRG) neurons (13.6%); predominantly small diameter DRG neurons (75%) with the remainder expressed in medium diameter DRG neurons (PubMed:31474366).</text>
</comment>
<comment type="developmental stage">
    <text evidence="9">Expressed during brain development. Expression drops in the adult.</text>
</comment>
<comment type="PTM">
    <text evidence="1">Sumoylation mediates kainate receptor-mediated endocytosis and regulates synaptic transmission. Sumoylation is enhanced by PIAS3 and desumoylated by SENP1 (By similarity).</text>
</comment>
<comment type="PTM">
    <text evidence="1">Ubiquitinated. Ubiquitination regulates the GRIK2 levels at the synapse by leading kainate receptor degradation through proteasome (By similarity).</text>
</comment>
<comment type="PTM">
    <text evidence="2">Phosphorylated by PKC at Ser-868 upon agonist activation, this directly enhance sumoylation.</text>
</comment>
<comment type="RNA editing">
    <location>
        <position position="567" evidence="10"/>
    </location>
    <location>
        <position position="571" evidence="10"/>
    </location>
    <location>
        <position position="621" evidence="10 11"/>
    </location>
    <text evidence="10">Partially edited. The presence of Gln at position 621 (non-edited) determines channels with low calcium permeability, whereas Arg (edited) determines a higher calcium permeability especially if the preceding sites are fully edited.</text>
</comment>
<comment type="miscellaneous">
    <text evidence="2">The postsynaptic actions of Glu are mediated by a variety of receptors that are named according to their selective agonists. This receptor binds domoate &gt; kainate &gt; quisqualate &gt; 6-cyano-7-nitroquinoxaline-2,3-dione &gt; L-glutamate = 6,7-dinitroquinoxaline-2,3-dione &gt; dihydrokainate (By similarity).</text>
</comment>
<comment type="similarity">
    <text evidence="14">Belongs to the glutamate-gated ion channel (TC 1.A.10.1) family. GRIK2 subfamily.</text>
</comment>
<comment type="sequence caution" evidence="14">
    <conflict type="frameshift">
        <sequence resource="EMBL-CDS" id="BAA00943"/>
    </conflict>
</comment>
<proteinExistence type="evidence at protein level"/>
<accession>P39087</accession>
<accession>Q60933</accession>
<evidence type="ECO:0000250" key="1">
    <source>
        <dbReference type="UniProtKB" id="P42260"/>
    </source>
</evidence>
<evidence type="ECO:0000250" key="2">
    <source>
        <dbReference type="UniProtKB" id="Q13002"/>
    </source>
</evidence>
<evidence type="ECO:0000255" key="3"/>
<evidence type="ECO:0000269" key="4">
    <source>
    </source>
</evidence>
<evidence type="ECO:0000269" key="5">
    <source>
    </source>
</evidence>
<evidence type="ECO:0000269" key="6">
    <source>
    </source>
</evidence>
<evidence type="ECO:0000269" key="7">
    <source>
    </source>
</evidence>
<evidence type="ECO:0000269" key="8">
    <source>
    </source>
</evidence>
<evidence type="ECO:0000269" key="9">
    <source>
    </source>
</evidence>
<evidence type="ECO:0000269" key="10">
    <source>
    </source>
</evidence>
<evidence type="ECO:0000269" key="11">
    <source>
    </source>
</evidence>
<evidence type="ECO:0000303" key="12">
    <source>
    </source>
</evidence>
<evidence type="ECO:0000303" key="13">
    <source>
    </source>
</evidence>
<evidence type="ECO:0000305" key="14"/>
<protein>
    <recommendedName>
        <fullName>Glutamate receptor ionotropic, kainate 2</fullName>
        <shortName>GluK2</shortName>
    </recommendedName>
    <alternativeName>
        <fullName>Glutamate receptor 6</fullName>
        <shortName>GluR-6</shortName>
        <shortName>GluR6</shortName>
    </alternativeName>
    <alternativeName>
        <fullName>Glutamate receptor beta-2</fullName>
        <shortName>GluR beta-2</shortName>
    </alternativeName>
</protein>
<feature type="signal peptide" evidence="3">
    <location>
        <begin position="1"/>
        <end position="31"/>
    </location>
</feature>
<feature type="chain" id="PRO_0000011545" description="Glutamate receptor ionotropic, kainate 2">
    <location>
        <begin position="32"/>
        <end position="908"/>
    </location>
</feature>
<feature type="topological domain" description="Extracellular" evidence="1">
    <location>
        <begin position="32"/>
        <end position="561"/>
    </location>
</feature>
<feature type="transmembrane region" description="Helical" evidence="3">
    <location>
        <begin position="562"/>
        <end position="582"/>
    </location>
</feature>
<feature type="topological domain" description="Cytoplasmic" evidence="1">
    <location>
        <begin position="583"/>
        <end position="638"/>
    </location>
</feature>
<feature type="transmembrane region" description="Helical" evidence="3">
    <location>
        <begin position="639"/>
        <end position="659"/>
    </location>
</feature>
<feature type="topological domain" description="Extracellular" evidence="1">
    <location>
        <begin position="660"/>
        <end position="819"/>
    </location>
</feature>
<feature type="transmembrane region" description="Helical" evidence="3">
    <location>
        <begin position="820"/>
        <end position="840"/>
    </location>
</feature>
<feature type="topological domain" description="Cytoplasmic" evidence="1">
    <location>
        <begin position="841"/>
        <end position="908"/>
    </location>
</feature>
<feature type="binding site" evidence="1">
    <location>
        <position position="516"/>
    </location>
    <ligand>
        <name>L-glutamate</name>
        <dbReference type="ChEBI" id="CHEBI:29985"/>
    </ligand>
</feature>
<feature type="binding site" evidence="1">
    <location>
        <position position="518"/>
    </location>
    <ligand>
        <name>L-glutamate</name>
        <dbReference type="ChEBI" id="CHEBI:29985"/>
    </ligand>
</feature>
<feature type="binding site" evidence="1">
    <location>
        <position position="523"/>
    </location>
    <ligand>
        <name>L-glutamate</name>
        <dbReference type="ChEBI" id="CHEBI:29985"/>
    </ligand>
</feature>
<feature type="binding site" evidence="1">
    <location>
        <position position="689"/>
    </location>
    <ligand>
        <name>L-glutamate</name>
        <dbReference type="ChEBI" id="CHEBI:29985"/>
    </ligand>
</feature>
<feature type="binding site" evidence="1">
    <location>
        <position position="690"/>
    </location>
    <ligand>
        <name>L-glutamate</name>
        <dbReference type="ChEBI" id="CHEBI:29985"/>
    </ligand>
</feature>
<feature type="binding site" evidence="1">
    <location>
        <position position="738"/>
    </location>
    <ligand>
        <name>L-glutamate</name>
        <dbReference type="ChEBI" id="CHEBI:29985"/>
    </ligand>
</feature>
<feature type="modified residue" description="Phosphoserine; by PKC" evidence="2">
    <location>
        <position position="846"/>
    </location>
</feature>
<feature type="modified residue" description="Phosphoserine; by PKC" evidence="2">
    <location>
        <position position="868"/>
    </location>
</feature>
<feature type="glycosylation site" description="N-linked (GlcNAc...) asparagine" evidence="3">
    <location>
        <position position="67"/>
    </location>
</feature>
<feature type="glycosylation site" description="N-linked (GlcNAc...) asparagine" evidence="3">
    <location>
        <position position="73"/>
    </location>
</feature>
<feature type="glycosylation site" description="N-linked (GlcNAc...) asparagine" evidence="3">
    <location>
        <position position="275"/>
    </location>
</feature>
<feature type="glycosylation site" description="N-linked (GlcNAc...) asparagine" evidence="3">
    <location>
        <position position="378"/>
    </location>
</feature>
<feature type="glycosylation site" description="N-linked (GlcNAc...) asparagine" evidence="3">
    <location>
        <position position="412"/>
    </location>
</feature>
<feature type="glycosylation site" description="N-linked (GlcNAc...) asparagine" evidence="3">
    <location>
        <position position="423"/>
    </location>
</feature>
<feature type="glycosylation site" description="N-linked (GlcNAc...) asparagine" evidence="3">
    <location>
        <position position="430"/>
    </location>
</feature>
<feature type="glycosylation site" description="N-linked (GlcNAc...) asparagine" evidence="3">
    <location>
        <position position="546"/>
    </location>
</feature>
<feature type="glycosylation site" description="N-linked (GlcNAc...) asparagine" evidence="3">
    <location>
        <position position="751"/>
    </location>
</feature>
<feature type="disulfide bond" evidence="1">
    <location>
        <begin position="96"/>
        <end position="347"/>
    </location>
</feature>
<feature type="disulfide bond" evidence="2">
    <location>
        <begin position="750"/>
        <end position="804"/>
    </location>
</feature>
<feature type="cross-link" description="Glycyl lysine isopeptide (Lys-Gly) (interchain with G-Cter in SUMO1)" evidence="2">
    <location>
        <position position="886"/>
    </location>
</feature>
<feature type="splice variant" id="VSP_000133" description="In isoform GluR6-2." evidence="12 13">
    <original>RSFCSAMVEELRMSLKCQRRLKHKPQAPVIVKTEEVINMHTFNDRRLPGKETMA</original>
    <variation>ESSIWLVPPYHPDTV</variation>
    <location>
        <begin position="855"/>
        <end position="908"/>
    </location>
</feature>
<feature type="sequence variant" description="In RNA edited version.">
    <original>I</original>
    <variation>V</variation>
    <location>
        <position position="567"/>
    </location>
</feature>
<feature type="sequence variant" description="In RNA edited version.">
    <original>Y</original>
    <variation>C</variation>
    <location>
        <position position="571"/>
    </location>
</feature>
<feature type="sequence variant" description="In RNA edited version.">
    <original>Q</original>
    <variation>R</variation>
    <location>
        <position position="621"/>
    </location>
</feature>
<feature type="mutagenesis site" description="Abolishes cold receptor activity, no effect on ionotropic glutamate receptor activity." evidence="9">
    <original>P</original>
    <variation>L</variation>
    <location>
        <position position="151"/>
    </location>
</feature>
<feature type="mutagenesis site" description="Abolishes ionotropic glutamate receptor activity, no effect on cold receptor activity." evidence="9">
    <original>M</original>
    <variation>R</variation>
    <location>
        <position position="620"/>
    </location>
</feature>
<feature type="mutagenesis site" description="Abolishes ionotropic glutamate receptor activity, no effect on cold receptor activity." evidence="9">
    <original>Q</original>
    <variation>R</variation>
    <location>
        <position position="622"/>
    </location>
</feature>
<feature type="sequence conflict" description="In Ref. 1; CAA46907." evidence="14" ref="1">
    <original>S</original>
    <variation>G</variation>
    <location>
        <position position="611"/>
    </location>
</feature>
<feature type="sequence conflict" description="In Ref. 2; BAA00943." evidence="14" ref="2">
    <original>NAQLEKRSFCSAMVEE</original>
    <variation>TLNWKRGPSVAPWWKN</variation>
    <location>
        <begin position="849"/>
        <end position="864"/>
    </location>
</feature>
<gene>
    <name type="primary">Grik2</name>
    <name type="synonym">Glur6</name>
</gene>
<organism>
    <name type="scientific">Mus musculus</name>
    <name type="common">Mouse</name>
    <dbReference type="NCBI Taxonomy" id="10090"/>
    <lineage>
        <taxon>Eukaryota</taxon>
        <taxon>Metazoa</taxon>
        <taxon>Chordata</taxon>
        <taxon>Craniata</taxon>
        <taxon>Vertebrata</taxon>
        <taxon>Euteleostomi</taxon>
        <taxon>Mammalia</taxon>
        <taxon>Eutheria</taxon>
        <taxon>Euarchontoglires</taxon>
        <taxon>Glires</taxon>
        <taxon>Rodentia</taxon>
        <taxon>Myomorpha</taxon>
        <taxon>Muroidea</taxon>
        <taxon>Muridae</taxon>
        <taxon>Murinae</taxon>
        <taxon>Mus</taxon>
        <taxon>Mus</taxon>
    </lineage>
</organism>